<protein>
    <recommendedName>
        <fullName evidence="1">Recombination protein RecR</fullName>
    </recommendedName>
</protein>
<keyword id="KW-0227">DNA damage</keyword>
<keyword id="KW-0233">DNA recombination</keyword>
<keyword id="KW-0234">DNA repair</keyword>
<keyword id="KW-0479">Metal-binding</keyword>
<keyword id="KW-0862">Zinc</keyword>
<keyword id="KW-0863">Zinc-finger</keyword>
<proteinExistence type="inferred from homology"/>
<accession>B7GT67</accession>
<accession>E8MNF3</accession>
<evidence type="ECO:0000255" key="1">
    <source>
        <dbReference type="HAMAP-Rule" id="MF_00017"/>
    </source>
</evidence>
<dbReference type="EMBL" id="CP001095">
    <property type="protein sequence ID" value="ACJ51290.1"/>
    <property type="molecule type" value="Genomic_DNA"/>
</dbReference>
<dbReference type="EMBL" id="AP010889">
    <property type="protein sequence ID" value="BAJ67759.1"/>
    <property type="molecule type" value="Genomic_DNA"/>
</dbReference>
<dbReference type="RefSeq" id="WP_012576611.1">
    <property type="nucleotide sequence ID" value="NZ_JDTT01000001.1"/>
</dbReference>
<dbReference type="SMR" id="B7GT67"/>
<dbReference type="KEGG" id="bln:Blon_0161"/>
<dbReference type="KEGG" id="blon:BLIJ_0165"/>
<dbReference type="PATRIC" id="fig|391904.8.peg.167"/>
<dbReference type="HOGENOM" id="CLU_060739_1_0_11"/>
<dbReference type="Proteomes" id="UP000001360">
    <property type="component" value="Chromosome"/>
</dbReference>
<dbReference type="GO" id="GO:0003677">
    <property type="term" value="F:DNA binding"/>
    <property type="evidence" value="ECO:0007669"/>
    <property type="project" value="UniProtKB-UniRule"/>
</dbReference>
<dbReference type="GO" id="GO:0008270">
    <property type="term" value="F:zinc ion binding"/>
    <property type="evidence" value="ECO:0007669"/>
    <property type="project" value="UniProtKB-KW"/>
</dbReference>
<dbReference type="GO" id="GO:0006310">
    <property type="term" value="P:DNA recombination"/>
    <property type="evidence" value="ECO:0007669"/>
    <property type="project" value="UniProtKB-UniRule"/>
</dbReference>
<dbReference type="GO" id="GO:0006281">
    <property type="term" value="P:DNA repair"/>
    <property type="evidence" value="ECO:0007669"/>
    <property type="project" value="UniProtKB-UniRule"/>
</dbReference>
<dbReference type="CDD" id="cd01025">
    <property type="entry name" value="TOPRIM_recR"/>
    <property type="match status" value="1"/>
</dbReference>
<dbReference type="Gene3D" id="3.40.1360.10">
    <property type="match status" value="1"/>
</dbReference>
<dbReference type="Gene3D" id="6.10.250.240">
    <property type="match status" value="1"/>
</dbReference>
<dbReference type="Gene3D" id="1.10.8.420">
    <property type="entry name" value="RecR Domain 1"/>
    <property type="match status" value="1"/>
</dbReference>
<dbReference type="HAMAP" id="MF_00017">
    <property type="entry name" value="RecR"/>
    <property type="match status" value="1"/>
</dbReference>
<dbReference type="InterPro" id="IPR000093">
    <property type="entry name" value="DNA_Rcmb_RecR"/>
</dbReference>
<dbReference type="InterPro" id="IPR023627">
    <property type="entry name" value="Rcmb_RecR"/>
</dbReference>
<dbReference type="InterPro" id="IPR015967">
    <property type="entry name" value="Rcmb_RecR_Znf"/>
</dbReference>
<dbReference type="InterPro" id="IPR006171">
    <property type="entry name" value="TOPRIM_dom"/>
</dbReference>
<dbReference type="InterPro" id="IPR034137">
    <property type="entry name" value="TOPRIM_RecR"/>
</dbReference>
<dbReference type="NCBIfam" id="TIGR00615">
    <property type="entry name" value="recR"/>
    <property type="match status" value="1"/>
</dbReference>
<dbReference type="PANTHER" id="PTHR30446">
    <property type="entry name" value="RECOMBINATION PROTEIN RECR"/>
    <property type="match status" value="1"/>
</dbReference>
<dbReference type="PANTHER" id="PTHR30446:SF0">
    <property type="entry name" value="RECOMBINATION PROTEIN RECR"/>
    <property type="match status" value="1"/>
</dbReference>
<dbReference type="Pfam" id="PF21175">
    <property type="entry name" value="RecR_C"/>
    <property type="match status" value="1"/>
</dbReference>
<dbReference type="Pfam" id="PF21176">
    <property type="entry name" value="RecR_HhH"/>
    <property type="match status" value="1"/>
</dbReference>
<dbReference type="Pfam" id="PF02132">
    <property type="entry name" value="RecR_ZnF"/>
    <property type="match status" value="1"/>
</dbReference>
<dbReference type="Pfam" id="PF13662">
    <property type="entry name" value="Toprim_4"/>
    <property type="match status" value="1"/>
</dbReference>
<dbReference type="SMART" id="SM00493">
    <property type="entry name" value="TOPRIM"/>
    <property type="match status" value="1"/>
</dbReference>
<dbReference type="SUPFAM" id="SSF111304">
    <property type="entry name" value="Recombination protein RecR"/>
    <property type="match status" value="1"/>
</dbReference>
<dbReference type="PROSITE" id="PS01300">
    <property type="entry name" value="RECR"/>
    <property type="match status" value="1"/>
</dbReference>
<dbReference type="PROSITE" id="PS50880">
    <property type="entry name" value="TOPRIM"/>
    <property type="match status" value="1"/>
</dbReference>
<feature type="chain" id="PRO_1000195366" description="Recombination protein RecR">
    <location>
        <begin position="1"/>
        <end position="200"/>
    </location>
</feature>
<feature type="domain" description="Toprim" evidence="1">
    <location>
        <begin position="82"/>
        <end position="177"/>
    </location>
</feature>
<feature type="zinc finger region" description="C4-type" evidence="1">
    <location>
        <begin position="59"/>
        <end position="74"/>
    </location>
</feature>
<sequence>MALAYDGAIQRLIDAFGRLPGIGPKGAQRIAFYMLSAPEDEARDLAEAIEEVKAKIRFCDICGNVCESSPCPVCADPRRDRSVICVVEEPKDVMSIERTREYRGLYHVLGGAINPMANVGPADLRIPSLLKRLEGDEVKEVIMALDPNIEGEATTSYLTQLLRPVGVKVTRLASGLPVGSDLEYADEITLGRALAGRREA</sequence>
<name>RECR_BIFLS</name>
<comment type="function">
    <text evidence="1">May play a role in DNA repair. It seems to be involved in an RecBC-independent recombinational process of DNA repair. It may act with RecF and RecO.</text>
</comment>
<comment type="similarity">
    <text evidence="1">Belongs to the RecR family.</text>
</comment>
<gene>
    <name evidence="1" type="primary">recR</name>
    <name type="ordered locus">Blon_0161</name>
    <name type="ordered locus">BLIJ_0165</name>
</gene>
<organism>
    <name type="scientific">Bifidobacterium longum subsp. infantis (strain ATCC 15697 / DSM 20088 / JCM 1222 / NCTC 11817 / S12)</name>
    <dbReference type="NCBI Taxonomy" id="391904"/>
    <lineage>
        <taxon>Bacteria</taxon>
        <taxon>Bacillati</taxon>
        <taxon>Actinomycetota</taxon>
        <taxon>Actinomycetes</taxon>
        <taxon>Bifidobacteriales</taxon>
        <taxon>Bifidobacteriaceae</taxon>
        <taxon>Bifidobacterium</taxon>
    </lineage>
</organism>
<reference key="1">
    <citation type="journal article" date="2008" name="Proc. Natl. Acad. Sci. U.S.A.">
        <title>The genome sequence of Bifidobacterium longum subsp. infantis reveals adaptations for milk utilization within the infant microbiome.</title>
        <authorList>
            <person name="Sela D.A."/>
            <person name="Chapman J."/>
            <person name="Adeuya A."/>
            <person name="Kim J.H."/>
            <person name="Chen F."/>
            <person name="Whitehead T.R."/>
            <person name="Lapidus A."/>
            <person name="Rokhsar D.S."/>
            <person name="Lebrilla C.B."/>
            <person name="German J.B."/>
            <person name="Price N.P."/>
            <person name="Richardson P.M."/>
            <person name="Mills D.A."/>
        </authorList>
    </citation>
    <scope>NUCLEOTIDE SEQUENCE [LARGE SCALE GENOMIC DNA]</scope>
    <source>
        <strain>ATCC 15697 / DSM 20088 / JCM 1222 / NCTC 11817 / S12</strain>
    </source>
</reference>
<reference key="2">
    <citation type="journal article" date="2011" name="Nature">
        <title>Bifidobacteria can protect from enteropathogenic infection through production of acetate.</title>
        <authorList>
            <person name="Fukuda S."/>
            <person name="Toh H."/>
            <person name="Hase K."/>
            <person name="Oshima K."/>
            <person name="Nakanishi Y."/>
            <person name="Yoshimura K."/>
            <person name="Tobe T."/>
            <person name="Clarke J.M."/>
            <person name="Topping D.L."/>
            <person name="Suzuki T."/>
            <person name="Taylor T.D."/>
            <person name="Itoh K."/>
            <person name="Kikuchi J."/>
            <person name="Morita H."/>
            <person name="Hattori M."/>
            <person name="Ohno H."/>
        </authorList>
    </citation>
    <scope>NUCLEOTIDE SEQUENCE [LARGE SCALE GENOMIC DNA]</scope>
    <source>
        <strain>ATCC 15697 / DSM 20088 / JCM 1222 / NCTC 11817 / S12</strain>
    </source>
</reference>